<proteinExistence type="inferred from homology"/>
<organism>
    <name type="scientific">Streptococcus pyogenes serotype M28 (strain MGAS6180)</name>
    <dbReference type="NCBI Taxonomy" id="319701"/>
    <lineage>
        <taxon>Bacteria</taxon>
        <taxon>Bacillati</taxon>
        <taxon>Bacillota</taxon>
        <taxon>Bacilli</taxon>
        <taxon>Lactobacillales</taxon>
        <taxon>Streptococcaceae</taxon>
        <taxon>Streptococcus</taxon>
    </lineage>
</organism>
<keyword id="KW-0064">Aspartyl protease</keyword>
<keyword id="KW-1003">Cell membrane</keyword>
<keyword id="KW-0378">Hydrolase</keyword>
<keyword id="KW-0472">Membrane</keyword>
<keyword id="KW-0645">Protease</keyword>
<keyword id="KW-0812">Transmembrane</keyword>
<keyword id="KW-1133">Transmembrane helix</keyword>
<feature type="chain" id="PRO_0000289443" description="Lipoprotein signal peptidase">
    <location>
        <begin position="1"/>
        <end position="152"/>
    </location>
</feature>
<feature type="transmembrane region" description="Helical" evidence="1">
    <location>
        <begin position="5"/>
        <end position="25"/>
    </location>
</feature>
<feature type="transmembrane region" description="Helical" evidence="1">
    <location>
        <begin position="61"/>
        <end position="81"/>
    </location>
</feature>
<feature type="transmembrane region" description="Helical" evidence="1">
    <location>
        <begin position="84"/>
        <end position="104"/>
    </location>
</feature>
<feature type="transmembrane region" description="Helical" evidence="1">
    <location>
        <begin position="125"/>
        <end position="145"/>
    </location>
</feature>
<feature type="active site" evidence="1">
    <location>
        <position position="114"/>
    </location>
</feature>
<feature type="active site" evidence="1">
    <location>
        <position position="130"/>
    </location>
</feature>
<reference key="1">
    <citation type="journal article" date="2005" name="J. Infect. Dis.">
        <title>Genome sequence of a serotype M28 strain of group A Streptococcus: potential new insights into puerperal sepsis and bacterial disease specificity.</title>
        <authorList>
            <person name="Green N.M."/>
            <person name="Zhang S."/>
            <person name="Porcella S.F."/>
            <person name="Nagiec M.J."/>
            <person name="Barbian K.D."/>
            <person name="Beres S.B."/>
            <person name="Lefebvre R.B."/>
            <person name="Musser J.M."/>
        </authorList>
    </citation>
    <scope>NUCLEOTIDE SEQUENCE [LARGE SCALE GENOMIC DNA]</scope>
    <source>
        <strain>MGAS6180</strain>
    </source>
</reference>
<protein>
    <recommendedName>
        <fullName evidence="1">Lipoprotein signal peptidase</fullName>
        <ecNumber evidence="1">3.4.23.36</ecNumber>
    </recommendedName>
    <alternativeName>
        <fullName evidence="1">Prolipoprotein signal peptidase</fullName>
    </alternativeName>
    <alternativeName>
        <fullName evidence="1">Signal peptidase II</fullName>
        <shortName evidence="1">SPase II</shortName>
    </alternativeName>
</protein>
<evidence type="ECO:0000255" key="1">
    <source>
        <dbReference type="HAMAP-Rule" id="MF_00161"/>
    </source>
</evidence>
<comment type="function">
    <text evidence="1">This protein specifically catalyzes the removal of signal peptides from prolipoproteins.</text>
</comment>
<comment type="catalytic activity">
    <reaction evidence="1">
        <text>Release of signal peptides from bacterial membrane prolipoproteins. Hydrolyzes -Xaa-Yaa-Zaa-|-(S,diacylglyceryl)Cys-, in which Xaa is hydrophobic (preferably Leu), and Yaa (Ala or Ser) and Zaa (Gly or Ala) have small, neutral side chains.</text>
        <dbReference type="EC" id="3.4.23.36"/>
    </reaction>
</comment>
<comment type="pathway">
    <text evidence="1">Protein modification; lipoprotein biosynthesis (signal peptide cleavage).</text>
</comment>
<comment type="subcellular location">
    <subcellularLocation>
        <location evidence="1">Cell membrane</location>
        <topology evidence="1">Multi-pass membrane protein</topology>
    </subcellularLocation>
</comment>
<comment type="similarity">
    <text evidence="1">Belongs to the peptidase A8 family.</text>
</comment>
<dbReference type="EC" id="3.4.23.36" evidence="1"/>
<dbReference type="EMBL" id="CP000056">
    <property type="protein sequence ID" value="AAX71731.1"/>
    <property type="molecule type" value="Genomic_DNA"/>
</dbReference>
<dbReference type="RefSeq" id="WP_002985097.1">
    <property type="nucleotide sequence ID" value="NC_007296.2"/>
</dbReference>
<dbReference type="SMR" id="Q48U75"/>
<dbReference type="GeneID" id="69901059"/>
<dbReference type="KEGG" id="spb:M28_Spy0617"/>
<dbReference type="HOGENOM" id="CLU_083252_3_3_9"/>
<dbReference type="UniPathway" id="UPA00665"/>
<dbReference type="GO" id="GO:0005886">
    <property type="term" value="C:plasma membrane"/>
    <property type="evidence" value="ECO:0007669"/>
    <property type="project" value="UniProtKB-SubCell"/>
</dbReference>
<dbReference type="GO" id="GO:0004190">
    <property type="term" value="F:aspartic-type endopeptidase activity"/>
    <property type="evidence" value="ECO:0007669"/>
    <property type="project" value="UniProtKB-UniRule"/>
</dbReference>
<dbReference type="GO" id="GO:0006508">
    <property type="term" value="P:proteolysis"/>
    <property type="evidence" value="ECO:0007669"/>
    <property type="project" value="UniProtKB-KW"/>
</dbReference>
<dbReference type="HAMAP" id="MF_00161">
    <property type="entry name" value="LspA"/>
    <property type="match status" value="1"/>
</dbReference>
<dbReference type="InterPro" id="IPR001872">
    <property type="entry name" value="Peptidase_A8"/>
</dbReference>
<dbReference type="NCBIfam" id="TIGR00077">
    <property type="entry name" value="lspA"/>
    <property type="match status" value="1"/>
</dbReference>
<dbReference type="PANTHER" id="PTHR33695">
    <property type="entry name" value="LIPOPROTEIN SIGNAL PEPTIDASE"/>
    <property type="match status" value="1"/>
</dbReference>
<dbReference type="PANTHER" id="PTHR33695:SF1">
    <property type="entry name" value="LIPOPROTEIN SIGNAL PEPTIDASE"/>
    <property type="match status" value="1"/>
</dbReference>
<dbReference type="Pfam" id="PF01252">
    <property type="entry name" value="Peptidase_A8"/>
    <property type="match status" value="1"/>
</dbReference>
<dbReference type="PRINTS" id="PR00781">
    <property type="entry name" value="LIPOSIGPTASE"/>
</dbReference>
<dbReference type="PROSITE" id="PS00855">
    <property type="entry name" value="SPASE_II"/>
    <property type="match status" value="1"/>
</dbReference>
<sequence length="152" mass="17272">MKKRLFVLSLILLVALDQLSKFWIVSHIALGEVKPFIPGIVSLTYLQNNGAAFSILQDQQWFFVVITVLVIGYAIYYLATHPHLNIWKQLALLLIISGGIGNFIDRLRLAYVIDMVHLDFVDFAIFNVADSYLTVGVILLVICLWKEEDYGN</sequence>
<name>LSPA_STRPM</name>
<gene>
    <name evidence="1" type="primary">lspA</name>
    <name type="ordered locus">M28_Spy0617</name>
</gene>
<accession>Q48U75</accession>